<protein>
    <recommendedName>
        <fullName evidence="1">Small ribosomal subunit protein uS4</fullName>
    </recommendedName>
    <alternativeName>
        <fullName evidence="2">30S ribosomal protein S4</fullName>
    </alternativeName>
</protein>
<keyword id="KW-0002">3D-structure</keyword>
<keyword id="KW-1185">Reference proteome</keyword>
<keyword id="KW-0687">Ribonucleoprotein</keyword>
<keyword id="KW-0689">Ribosomal protein</keyword>
<keyword id="KW-0694">RNA-binding</keyword>
<keyword id="KW-0699">rRNA-binding</keyword>
<organism>
    <name type="scientific">Mycobacterium tuberculosis (strain ATCC 25618 / H37Rv)</name>
    <dbReference type="NCBI Taxonomy" id="83332"/>
    <lineage>
        <taxon>Bacteria</taxon>
        <taxon>Bacillati</taxon>
        <taxon>Actinomycetota</taxon>
        <taxon>Actinomycetes</taxon>
        <taxon>Mycobacteriales</taxon>
        <taxon>Mycobacteriaceae</taxon>
        <taxon>Mycobacterium</taxon>
        <taxon>Mycobacterium tuberculosis complex</taxon>
    </lineage>
</organism>
<name>RS4_MYCTU</name>
<proteinExistence type="evidence at protein level"/>
<comment type="function">
    <text evidence="1">One of the primary rRNA binding proteins, it binds directly to 16S rRNA where it nucleates assembly of the body of the 30S subunit.</text>
</comment>
<comment type="function">
    <text evidence="1">With S5 and S12 plays an important role in translational accuracy.</text>
</comment>
<comment type="subunit">
    <text evidence="1">Part of the 30S ribosomal subunit. Contacts protein S5. The interaction surface between S4 and S5 is involved in control of translational fidelity.</text>
</comment>
<comment type="miscellaneous">
    <text>Was identified as a high-confidence drug target.</text>
</comment>
<comment type="similarity">
    <text evidence="1">Belongs to the universal ribosomal protein uS4 family.</text>
</comment>
<evidence type="ECO:0000255" key="1">
    <source>
        <dbReference type="HAMAP-Rule" id="MF_01306"/>
    </source>
</evidence>
<evidence type="ECO:0000305" key="2"/>
<reference key="1">
    <citation type="journal article" date="1998" name="Nature">
        <title>Deciphering the biology of Mycobacterium tuberculosis from the complete genome sequence.</title>
        <authorList>
            <person name="Cole S.T."/>
            <person name="Brosch R."/>
            <person name="Parkhill J."/>
            <person name="Garnier T."/>
            <person name="Churcher C.M."/>
            <person name="Harris D.E."/>
            <person name="Gordon S.V."/>
            <person name="Eiglmeier K."/>
            <person name="Gas S."/>
            <person name="Barry C.E. III"/>
            <person name="Tekaia F."/>
            <person name="Badcock K."/>
            <person name="Basham D."/>
            <person name="Brown D."/>
            <person name="Chillingworth T."/>
            <person name="Connor R."/>
            <person name="Davies R.M."/>
            <person name="Devlin K."/>
            <person name="Feltwell T."/>
            <person name="Gentles S."/>
            <person name="Hamlin N."/>
            <person name="Holroyd S."/>
            <person name="Hornsby T."/>
            <person name="Jagels K."/>
            <person name="Krogh A."/>
            <person name="McLean J."/>
            <person name="Moule S."/>
            <person name="Murphy L.D."/>
            <person name="Oliver S."/>
            <person name="Osborne J."/>
            <person name="Quail M.A."/>
            <person name="Rajandream M.A."/>
            <person name="Rogers J."/>
            <person name="Rutter S."/>
            <person name="Seeger K."/>
            <person name="Skelton S."/>
            <person name="Squares S."/>
            <person name="Squares R."/>
            <person name="Sulston J.E."/>
            <person name="Taylor K."/>
            <person name="Whitehead S."/>
            <person name="Barrell B.G."/>
        </authorList>
    </citation>
    <scope>NUCLEOTIDE SEQUENCE [LARGE SCALE GENOMIC DNA]</scope>
    <source>
        <strain>ATCC 25618 / H37Rv</strain>
    </source>
</reference>
<reference key="2">
    <citation type="journal article" date="2008" name="BMC Syst. Biol.">
        <title>targetTB: a target identification pipeline for Mycobacterium tuberculosis through an interactome, reactome and genome-scale structural analysis.</title>
        <authorList>
            <person name="Raman K."/>
            <person name="Yeturu K."/>
            <person name="Chandra N."/>
        </authorList>
    </citation>
    <scope>IDENTIFICATION AS A DRUG TARGET [LARGE SCALE ANALYSIS]</scope>
</reference>
<reference key="3">
    <citation type="journal article" date="2011" name="Mol. Cell. Proteomics">
        <title>Proteogenomic analysis of Mycobacterium tuberculosis by high resolution mass spectrometry.</title>
        <authorList>
            <person name="Kelkar D.S."/>
            <person name="Kumar D."/>
            <person name="Kumar P."/>
            <person name="Balakrishnan L."/>
            <person name="Muthusamy B."/>
            <person name="Yadav A.K."/>
            <person name="Shrivastava P."/>
            <person name="Marimuthu A."/>
            <person name="Anand S."/>
            <person name="Sundaram H."/>
            <person name="Kingsbury R."/>
            <person name="Harsha H.C."/>
            <person name="Nair B."/>
            <person name="Prasad T.S."/>
            <person name="Chauhan D.S."/>
            <person name="Katoch K."/>
            <person name="Katoch V.M."/>
            <person name="Kumar P."/>
            <person name="Chaerkady R."/>
            <person name="Ramachandran S."/>
            <person name="Dash D."/>
            <person name="Pandey A."/>
        </authorList>
    </citation>
    <scope>IDENTIFICATION BY MASS SPECTROMETRY [LARGE SCALE ANALYSIS]</scope>
    <source>
        <strain>ATCC 25618 / H37Rv</strain>
    </source>
</reference>
<dbReference type="EMBL" id="AL123456">
    <property type="protein sequence ID" value="CCP46280.1"/>
    <property type="molecule type" value="Genomic_DNA"/>
</dbReference>
<dbReference type="PIR" id="G70565">
    <property type="entry name" value="G70565"/>
</dbReference>
<dbReference type="RefSeq" id="NP_217975.1">
    <property type="nucleotide sequence ID" value="NC_000962.3"/>
</dbReference>
<dbReference type="RefSeq" id="WP_003418354.1">
    <property type="nucleotide sequence ID" value="NZ_NVQJ01000091.1"/>
</dbReference>
<dbReference type="PDB" id="5V93">
    <property type="method" value="EM"/>
    <property type="resolution" value="4.00 A"/>
    <property type="chains" value="d=1-201"/>
</dbReference>
<dbReference type="PDB" id="7KGB">
    <property type="method" value="EM"/>
    <property type="resolution" value="2.70 A"/>
    <property type="chains" value="d=1-201"/>
</dbReference>
<dbReference type="PDB" id="7MSC">
    <property type="method" value="EM"/>
    <property type="resolution" value="2.97 A"/>
    <property type="chains" value="d=1-201"/>
</dbReference>
<dbReference type="PDB" id="7MSH">
    <property type="method" value="EM"/>
    <property type="resolution" value="3.23 A"/>
    <property type="chains" value="d=1-201"/>
</dbReference>
<dbReference type="PDB" id="7MSM">
    <property type="method" value="EM"/>
    <property type="resolution" value="2.79 A"/>
    <property type="chains" value="d=1-201"/>
</dbReference>
<dbReference type="PDB" id="7MSZ">
    <property type="method" value="EM"/>
    <property type="resolution" value="3.10 A"/>
    <property type="chains" value="d=1-201"/>
</dbReference>
<dbReference type="PDB" id="7MT2">
    <property type="method" value="EM"/>
    <property type="resolution" value="2.76 A"/>
    <property type="chains" value="d=1-201"/>
</dbReference>
<dbReference type="PDB" id="7MT3">
    <property type="method" value="EM"/>
    <property type="resolution" value="2.80 A"/>
    <property type="chains" value="d=1-201"/>
</dbReference>
<dbReference type="PDB" id="7MT7">
    <property type="method" value="EM"/>
    <property type="resolution" value="2.71 A"/>
    <property type="chains" value="d=1-201"/>
</dbReference>
<dbReference type="PDB" id="7SFR">
    <property type="method" value="EM"/>
    <property type="resolution" value="2.60 A"/>
    <property type="chains" value="d=1-201"/>
</dbReference>
<dbReference type="PDBsum" id="5V93"/>
<dbReference type="PDBsum" id="7KGB"/>
<dbReference type="PDBsum" id="7MSC"/>
<dbReference type="PDBsum" id="7MSH"/>
<dbReference type="PDBsum" id="7MSM"/>
<dbReference type="PDBsum" id="7MSZ"/>
<dbReference type="PDBsum" id="7MT2"/>
<dbReference type="PDBsum" id="7MT3"/>
<dbReference type="PDBsum" id="7MT7"/>
<dbReference type="PDBsum" id="7SFR"/>
<dbReference type="EMDB" id="EMD-22865"/>
<dbReference type="EMDB" id="EMD-23961"/>
<dbReference type="EMDB" id="EMD-23962"/>
<dbReference type="EMDB" id="EMD-23969"/>
<dbReference type="EMDB" id="EMD-23972"/>
<dbReference type="EMDB" id="EMD-23974"/>
<dbReference type="EMDB" id="EMD-23975"/>
<dbReference type="EMDB" id="EMD-23976"/>
<dbReference type="EMDB" id="EMD-8645"/>
<dbReference type="SMR" id="P9WH35"/>
<dbReference type="FunCoup" id="P9WH35">
    <property type="interactions" value="291"/>
</dbReference>
<dbReference type="STRING" id="83332.Rv3458c"/>
<dbReference type="PaxDb" id="83332-Rv3458c"/>
<dbReference type="DNASU" id="887620"/>
<dbReference type="GeneID" id="45427447"/>
<dbReference type="GeneID" id="887620"/>
<dbReference type="KEGG" id="mtu:Rv3458c"/>
<dbReference type="KEGG" id="mtv:RVBD_3458c"/>
<dbReference type="TubercuList" id="Rv3458c"/>
<dbReference type="eggNOG" id="COG0522">
    <property type="taxonomic scope" value="Bacteria"/>
</dbReference>
<dbReference type="InParanoid" id="P9WH35"/>
<dbReference type="OrthoDB" id="9803672at2"/>
<dbReference type="PhylomeDB" id="P9WH35"/>
<dbReference type="PRO" id="PR:P9WH35"/>
<dbReference type="Proteomes" id="UP000001584">
    <property type="component" value="Chromosome"/>
</dbReference>
<dbReference type="GO" id="GO:0005829">
    <property type="term" value="C:cytosol"/>
    <property type="evidence" value="ECO:0007005"/>
    <property type="project" value="MTBBASE"/>
</dbReference>
<dbReference type="GO" id="GO:0009274">
    <property type="term" value="C:peptidoglycan-based cell wall"/>
    <property type="evidence" value="ECO:0007005"/>
    <property type="project" value="MTBBASE"/>
</dbReference>
<dbReference type="GO" id="GO:0005886">
    <property type="term" value="C:plasma membrane"/>
    <property type="evidence" value="ECO:0007005"/>
    <property type="project" value="MTBBASE"/>
</dbReference>
<dbReference type="GO" id="GO:0015935">
    <property type="term" value="C:small ribosomal subunit"/>
    <property type="evidence" value="ECO:0000318"/>
    <property type="project" value="GO_Central"/>
</dbReference>
<dbReference type="GO" id="GO:0019843">
    <property type="term" value="F:rRNA binding"/>
    <property type="evidence" value="ECO:0000318"/>
    <property type="project" value="GO_Central"/>
</dbReference>
<dbReference type="GO" id="GO:0003735">
    <property type="term" value="F:structural constituent of ribosome"/>
    <property type="evidence" value="ECO:0000318"/>
    <property type="project" value="GO_Central"/>
</dbReference>
<dbReference type="GO" id="GO:0042274">
    <property type="term" value="P:ribosomal small subunit biogenesis"/>
    <property type="evidence" value="ECO:0000318"/>
    <property type="project" value="GO_Central"/>
</dbReference>
<dbReference type="GO" id="GO:0006412">
    <property type="term" value="P:translation"/>
    <property type="evidence" value="ECO:0007669"/>
    <property type="project" value="UniProtKB-UniRule"/>
</dbReference>
<dbReference type="CDD" id="cd00165">
    <property type="entry name" value="S4"/>
    <property type="match status" value="1"/>
</dbReference>
<dbReference type="FunFam" id="3.10.290.10:FF:000001">
    <property type="entry name" value="30S ribosomal protein S4"/>
    <property type="match status" value="1"/>
</dbReference>
<dbReference type="Gene3D" id="1.10.1050.10">
    <property type="entry name" value="Ribosomal Protein S4 Delta 41, Chain A, domain 1"/>
    <property type="match status" value="1"/>
</dbReference>
<dbReference type="Gene3D" id="3.10.290.10">
    <property type="entry name" value="RNA-binding S4 domain"/>
    <property type="match status" value="1"/>
</dbReference>
<dbReference type="HAMAP" id="MF_01306_B">
    <property type="entry name" value="Ribosomal_uS4_B"/>
    <property type="match status" value="1"/>
</dbReference>
<dbReference type="InterPro" id="IPR022801">
    <property type="entry name" value="Ribosomal_uS4"/>
</dbReference>
<dbReference type="InterPro" id="IPR005709">
    <property type="entry name" value="Ribosomal_uS4_bac-type"/>
</dbReference>
<dbReference type="InterPro" id="IPR018079">
    <property type="entry name" value="Ribosomal_uS4_CS"/>
</dbReference>
<dbReference type="InterPro" id="IPR001912">
    <property type="entry name" value="Ribosomal_uS4_N"/>
</dbReference>
<dbReference type="InterPro" id="IPR002942">
    <property type="entry name" value="S4_RNA-bd"/>
</dbReference>
<dbReference type="InterPro" id="IPR036986">
    <property type="entry name" value="S4_RNA-bd_sf"/>
</dbReference>
<dbReference type="NCBIfam" id="NF003717">
    <property type="entry name" value="PRK05327.1"/>
    <property type="match status" value="1"/>
</dbReference>
<dbReference type="NCBIfam" id="TIGR01017">
    <property type="entry name" value="rpsD_bact"/>
    <property type="match status" value="1"/>
</dbReference>
<dbReference type="PANTHER" id="PTHR11831">
    <property type="entry name" value="30S 40S RIBOSOMAL PROTEIN"/>
    <property type="match status" value="1"/>
</dbReference>
<dbReference type="PANTHER" id="PTHR11831:SF4">
    <property type="entry name" value="SMALL RIBOSOMAL SUBUNIT PROTEIN US4M"/>
    <property type="match status" value="1"/>
</dbReference>
<dbReference type="Pfam" id="PF00163">
    <property type="entry name" value="Ribosomal_S4"/>
    <property type="match status" value="1"/>
</dbReference>
<dbReference type="Pfam" id="PF01479">
    <property type="entry name" value="S4"/>
    <property type="match status" value="1"/>
</dbReference>
<dbReference type="SMART" id="SM01390">
    <property type="entry name" value="Ribosomal_S4"/>
    <property type="match status" value="1"/>
</dbReference>
<dbReference type="SMART" id="SM00363">
    <property type="entry name" value="S4"/>
    <property type="match status" value="1"/>
</dbReference>
<dbReference type="SUPFAM" id="SSF55174">
    <property type="entry name" value="Alpha-L RNA-binding motif"/>
    <property type="match status" value="1"/>
</dbReference>
<dbReference type="PROSITE" id="PS00632">
    <property type="entry name" value="RIBOSOMAL_S4"/>
    <property type="match status" value="1"/>
</dbReference>
<dbReference type="PROSITE" id="PS50889">
    <property type="entry name" value="S4"/>
    <property type="match status" value="1"/>
</dbReference>
<feature type="chain" id="PRO_0000132422" description="Small ribosomal subunit protein uS4">
    <location>
        <begin position="1"/>
        <end position="201"/>
    </location>
</feature>
<feature type="domain" description="S4 RNA-binding" evidence="1">
    <location>
        <begin position="91"/>
        <end position="157"/>
    </location>
</feature>
<sequence length="201" mass="23476">MARYTGPVTRKSRRLRTDLVGGDQAFEKRPYPPGQHGRARIKESEYLLQLQEKQKARFTYGVMEKQFRRYYEEAVRQPGKTGEELLKILESRLDNVIYRAGLARTRRMARQLVSHGHFNVNGVHVNVPSYRVSQYDIVDVRDKSLNTVPFQIARETAGERPIPSWLQVVGERQRVLIHQLPERAQIDVPLTEQLIVEYYSK</sequence>
<gene>
    <name evidence="1" type="primary">rpsD</name>
    <name type="ordered locus">Rv3458c</name>
    <name type="ORF">MTCY13E12.11c</name>
</gene>
<accession>P9WH35</accession>
<accession>L0TFP5</accession>
<accession>O06325</accession>